<gene>
    <name type="primary">recX</name>
    <name type="ordered locus">CPE1923</name>
</gene>
<proteinExistence type="inferred from homology"/>
<sequence length="212" mass="25084">MGKITSIEVQKRNVNRVNVYVDEAFTFACDAELIYKQGIQKDSIIDIEAIKEIVKEDEFIKCKNSALRTVEKTYKTEKELRDKLAEKGFEEDTIKRAIEFLKEYNLLNDEKYAEMYIKDRLRSQGRNKIKYALIRKGVSEDILLDKLSNIDTEDENDTAFKLAEKKYNILKKKESDKYKLSQKLFRFLLSKGYDYDCCNSIVRRLTNNEYME</sequence>
<protein>
    <recommendedName>
        <fullName>Regulatory protein RecX</fullName>
    </recommendedName>
</protein>
<accession>Q8XJ38</accession>
<dbReference type="EMBL" id="BA000016">
    <property type="protein sequence ID" value="BAB81629.1"/>
    <property type="molecule type" value="Genomic_DNA"/>
</dbReference>
<dbReference type="RefSeq" id="WP_011010684.1">
    <property type="nucleotide sequence ID" value="NC_003366.1"/>
</dbReference>
<dbReference type="SMR" id="Q8XJ38"/>
<dbReference type="STRING" id="195102.gene:10491192"/>
<dbReference type="KEGG" id="cpe:CPE1923"/>
<dbReference type="HOGENOM" id="CLU_066607_4_1_9"/>
<dbReference type="Proteomes" id="UP000000818">
    <property type="component" value="Chromosome"/>
</dbReference>
<dbReference type="GO" id="GO:0005737">
    <property type="term" value="C:cytoplasm"/>
    <property type="evidence" value="ECO:0007669"/>
    <property type="project" value="UniProtKB-SubCell"/>
</dbReference>
<dbReference type="GO" id="GO:0006282">
    <property type="term" value="P:regulation of DNA repair"/>
    <property type="evidence" value="ECO:0007669"/>
    <property type="project" value="UniProtKB-UniRule"/>
</dbReference>
<dbReference type="Gene3D" id="1.10.10.10">
    <property type="entry name" value="Winged helix-like DNA-binding domain superfamily/Winged helix DNA-binding domain"/>
    <property type="match status" value="3"/>
</dbReference>
<dbReference type="HAMAP" id="MF_01114">
    <property type="entry name" value="RecX"/>
    <property type="match status" value="1"/>
</dbReference>
<dbReference type="InterPro" id="IPR053926">
    <property type="entry name" value="RecX_HTH_1st"/>
</dbReference>
<dbReference type="InterPro" id="IPR053924">
    <property type="entry name" value="RecX_HTH_2nd"/>
</dbReference>
<dbReference type="InterPro" id="IPR053925">
    <property type="entry name" value="RecX_HTH_3rd"/>
</dbReference>
<dbReference type="InterPro" id="IPR003783">
    <property type="entry name" value="Regulatory_RecX"/>
</dbReference>
<dbReference type="InterPro" id="IPR036388">
    <property type="entry name" value="WH-like_DNA-bd_sf"/>
</dbReference>
<dbReference type="NCBIfam" id="NF001058">
    <property type="entry name" value="PRK00117.4-1"/>
    <property type="match status" value="1"/>
</dbReference>
<dbReference type="PANTHER" id="PTHR33602">
    <property type="entry name" value="REGULATORY PROTEIN RECX FAMILY PROTEIN"/>
    <property type="match status" value="1"/>
</dbReference>
<dbReference type="PANTHER" id="PTHR33602:SF1">
    <property type="entry name" value="REGULATORY PROTEIN RECX FAMILY PROTEIN"/>
    <property type="match status" value="1"/>
</dbReference>
<dbReference type="Pfam" id="PF21982">
    <property type="entry name" value="RecX_HTH1"/>
    <property type="match status" value="1"/>
</dbReference>
<dbReference type="Pfam" id="PF02631">
    <property type="entry name" value="RecX_HTH2"/>
    <property type="match status" value="1"/>
</dbReference>
<dbReference type="Pfam" id="PF21981">
    <property type="entry name" value="RecX_HTH3"/>
    <property type="match status" value="1"/>
</dbReference>
<comment type="function">
    <text evidence="1">Modulates RecA activity.</text>
</comment>
<comment type="subcellular location">
    <subcellularLocation>
        <location evidence="2">Cytoplasm</location>
    </subcellularLocation>
</comment>
<comment type="similarity">
    <text evidence="2">Belongs to the RecX family.</text>
</comment>
<feature type="chain" id="PRO_0000162423" description="Regulatory protein RecX">
    <location>
        <begin position="1"/>
        <end position="212"/>
    </location>
</feature>
<name>RECX_CLOPE</name>
<organism>
    <name type="scientific">Clostridium perfringens (strain 13 / Type A)</name>
    <dbReference type="NCBI Taxonomy" id="195102"/>
    <lineage>
        <taxon>Bacteria</taxon>
        <taxon>Bacillati</taxon>
        <taxon>Bacillota</taxon>
        <taxon>Clostridia</taxon>
        <taxon>Eubacteriales</taxon>
        <taxon>Clostridiaceae</taxon>
        <taxon>Clostridium</taxon>
    </lineage>
</organism>
<evidence type="ECO:0000250" key="1"/>
<evidence type="ECO:0000305" key="2"/>
<reference key="1">
    <citation type="journal article" date="2002" name="Proc. Natl. Acad. Sci. U.S.A.">
        <title>Complete genome sequence of Clostridium perfringens, an anaerobic flesh-eater.</title>
        <authorList>
            <person name="Shimizu T."/>
            <person name="Ohtani K."/>
            <person name="Hirakawa H."/>
            <person name="Ohshima K."/>
            <person name="Yamashita A."/>
            <person name="Shiba T."/>
            <person name="Ogasawara N."/>
            <person name="Hattori M."/>
            <person name="Kuhara S."/>
            <person name="Hayashi H."/>
        </authorList>
    </citation>
    <scope>NUCLEOTIDE SEQUENCE [LARGE SCALE GENOMIC DNA]</scope>
    <source>
        <strain>13 / Type A</strain>
    </source>
</reference>
<keyword id="KW-0963">Cytoplasm</keyword>
<keyword id="KW-1185">Reference proteome</keyword>